<proteinExistence type="evidence at protein level"/>
<protein>
    <recommendedName>
        <fullName>Tudor and KH domain-containing protein</fullName>
    </recommendedName>
    <alternativeName>
        <fullName>Tudor domain-containing protein 2</fullName>
    </alternativeName>
</protein>
<organism>
    <name type="scientific">Mus musculus</name>
    <name type="common">Mouse</name>
    <dbReference type="NCBI Taxonomy" id="10090"/>
    <lineage>
        <taxon>Eukaryota</taxon>
        <taxon>Metazoa</taxon>
        <taxon>Chordata</taxon>
        <taxon>Craniata</taxon>
        <taxon>Vertebrata</taxon>
        <taxon>Euteleostomi</taxon>
        <taxon>Mammalia</taxon>
        <taxon>Eutheria</taxon>
        <taxon>Euarchontoglires</taxon>
        <taxon>Glires</taxon>
        <taxon>Rodentia</taxon>
        <taxon>Myomorpha</taxon>
        <taxon>Muroidea</taxon>
        <taxon>Muridae</taxon>
        <taxon>Murinae</taxon>
        <taxon>Mus</taxon>
        <taxon>Mus</taxon>
    </lineage>
</organism>
<sequence length="560" mass="62134">MSTERTSWTNLSTIQKIALGLGIPASATVAYILYRRYRESREERLTFVGEDDIEIEMRVPQEAVKLIIGRQGANIKQLRKQTGARIDVDTEDVGDERVLLISGFPVQVCKAKAAIHQILTENTPVFEQLSVPQRSVGRIIGRGGETIRSICKASGAKITCDKESEGTLLLSRLIKISGTQKEVAAAKHLILEKVSEDEELRKRIAHSAETRVPRKQPISVRREEVTEPGGAGEAALWKNTNSSMGPATPLEVPLRKGGGDMVVVGPKEGSWEKPNDDSFQNSGAQSSPETSMFEIPSPDFSFHADEYLEVYVSASEHPNHFWIQIIGSRSLQLDKLVSEMTQHYENSLPEDLTVHVGDIVAAPLSTNGSWYRARVLGTLENGNLDLYFVDFGDNGDCALKDLRALRSDFLSLPFQAIECSLARIAPTGEEWEEEALDEFDRLTHCADWKPLVAKISSYVQTGISTWPKIYLYDTSDEKKLDIGLELVRKGYAVELPEDMEENRTVPNMLKDMATETDDSLASILTETKKSPEEMPHTLSCLSLSEAASMSGDDNLEDDLF</sequence>
<feature type="chain" id="PRO_0000050142" description="Tudor and KH domain-containing protein">
    <location>
        <begin position="1"/>
        <end position="560"/>
    </location>
</feature>
<feature type="domain" description="KH 1" evidence="2">
    <location>
        <begin position="52"/>
        <end position="115"/>
    </location>
</feature>
<feature type="domain" description="KH 2" evidence="2">
    <location>
        <begin position="124"/>
        <end position="190"/>
    </location>
</feature>
<feature type="domain" description="Tudor" evidence="3">
    <location>
        <begin position="353"/>
        <end position="412"/>
    </location>
</feature>
<feature type="region of interest" description="Disordered" evidence="4">
    <location>
        <begin position="211"/>
        <end position="230"/>
    </location>
</feature>
<feature type="region of interest" description="Disordered" evidence="4">
    <location>
        <begin position="268"/>
        <end position="291"/>
    </location>
</feature>
<feature type="compositionally biased region" description="Polar residues" evidence="4">
    <location>
        <begin position="277"/>
        <end position="290"/>
    </location>
</feature>
<feature type="modified residue" description="Phosphoserine" evidence="1">
    <location>
        <position position="278"/>
    </location>
</feature>
<feature type="cross-link" description="Glycyl lysine isopeptide (Lys-Gly) (interchain with G-Cter in ubiquitin)" evidence="1">
    <location>
        <position position="65"/>
    </location>
</feature>
<feature type="cross-link" description="Glycyl lysine isopeptide (Lys-Gly) (interchain with G-Cter in ubiquitin)" evidence="1">
    <location>
        <position position="76"/>
    </location>
</feature>
<feature type="cross-link" description="Glycyl lysine isopeptide (Lys-Gly) (interchain with G-Cter in ubiquitin)" evidence="1">
    <location>
        <position position="110"/>
    </location>
</feature>
<feature type="cross-link" description="Glycyl lysine isopeptide (Lys-Gly) (interchain with G-Cter in ubiquitin)" evidence="1">
    <location>
        <position position="112"/>
    </location>
</feature>
<feature type="cross-link" description="Glycyl lysine isopeptide (Lys-Gly) (interchain with G-Cter in ubiquitin)" evidence="1">
    <location>
        <position position="152"/>
    </location>
</feature>
<feature type="cross-link" description="Glycyl lysine isopeptide (Lys-Gly) (interchain with G-Cter in ubiquitin)" evidence="1">
    <location>
        <position position="175"/>
    </location>
</feature>
<feature type="cross-link" description="Glycyl lysine isopeptide (Lys-Gly) (interchain with G-Cter in ubiquitin)" evidence="1">
    <location>
        <position position="181"/>
    </location>
</feature>
<feature type="cross-link" description="Glycyl lysine isopeptide (Lys-Gly) (interchain with G-Cter in ubiquitin)" evidence="1">
    <location>
        <position position="187"/>
    </location>
</feature>
<feature type="cross-link" description="Glycyl lysine isopeptide (Lys-Gly) (interchain with G-Cter in ubiquitin)" evidence="1">
    <location>
        <position position="193"/>
    </location>
</feature>
<feature type="cross-link" description="Glycyl lysine isopeptide (Lys-Gly) (interchain with G-Cter in ubiquitin)" evidence="1">
    <location>
        <position position="256"/>
    </location>
</feature>
<feature type="cross-link" description="Glycyl lysine isopeptide (Lys-Gly) (interchain with G-Cter in ubiquitin)" evidence="1">
    <location>
        <position position="267"/>
    </location>
</feature>
<feature type="cross-link" description="Glycyl lysine isopeptide (Lys-Gly) (interchain with G-Cter in ubiquitin)" evidence="1">
    <location>
        <position position="479"/>
    </location>
</feature>
<feature type="cross-link" description="Glycyl lysine isopeptide (Lys-Gly) (interchain with G-Cter in ubiquitin)" evidence="1">
    <location>
        <position position="510"/>
    </location>
</feature>
<feature type="cross-link" description="Glycyl lysine isopeptide (Lys-Gly) (interchain with G-Cter in ubiquitin)" evidence="1">
    <location>
        <position position="529"/>
    </location>
</feature>
<feature type="strand" evidence="9">
    <location>
        <begin position="120"/>
        <end position="122"/>
    </location>
</feature>
<feature type="strand" evidence="9">
    <location>
        <begin position="124"/>
        <end position="132"/>
    </location>
</feature>
<feature type="turn" evidence="9">
    <location>
        <begin position="133"/>
        <end position="135"/>
    </location>
</feature>
<feature type="helix" evidence="9">
    <location>
        <begin position="136"/>
        <end position="140"/>
    </location>
</feature>
<feature type="strand" evidence="9">
    <location>
        <begin position="142"/>
        <end position="144"/>
    </location>
</feature>
<feature type="helix" evidence="9">
    <location>
        <begin position="145"/>
        <end position="154"/>
    </location>
</feature>
<feature type="strand" evidence="9">
    <location>
        <begin position="157"/>
        <end position="160"/>
    </location>
</feature>
<feature type="strand" evidence="9">
    <location>
        <begin position="167"/>
        <end position="179"/>
    </location>
</feature>
<feature type="helix" evidence="9">
    <location>
        <begin position="180"/>
        <end position="205"/>
    </location>
</feature>
<reference key="1">
    <citation type="journal article" date="2009" name="PLoS Biol.">
        <title>Lineage-specific biology revealed by a finished genome assembly of the mouse.</title>
        <authorList>
            <person name="Church D.M."/>
            <person name="Goodstadt L."/>
            <person name="Hillier L.W."/>
            <person name="Zody M.C."/>
            <person name="Goldstein S."/>
            <person name="She X."/>
            <person name="Bult C.J."/>
            <person name="Agarwala R."/>
            <person name="Cherry J.L."/>
            <person name="DiCuccio M."/>
            <person name="Hlavina W."/>
            <person name="Kapustin Y."/>
            <person name="Meric P."/>
            <person name="Maglott D."/>
            <person name="Birtle Z."/>
            <person name="Marques A.C."/>
            <person name="Graves T."/>
            <person name="Zhou S."/>
            <person name="Teague B."/>
            <person name="Potamousis K."/>
            <person name="Churas C."/>
            <person name="Place M."/>
            <person name="Herschleb J."/>
            <person name="Runnheim R."/>
            <person name="Forrest D."/>
            <person name="Amos-Landgraf J."/>
            <person name="Schwartz D.C."/>
            <person name="Cheng Z."/>
            <person name="Lindblad-Toh K."/>
            <person name="Eichler E.E."/>
            <person name="Ponting C.P."/>
        </authorList>
    </citation>
    <scope>NUCLEOTIDE SEQUENCE [LARGE SCALE GENOMIC DNA]</scope>
    <source>
        <strain>C57BL/6J</strain>
    </source>
</reference>
<reference key="2">
    <citation type="journal article" date="2004" name="Genome Res.">
        <title>The status, quality, and expansion of the NIH full-length cDNA project: the Mammalian Gene Collection (MGC).</title>
        <authorList>
            <consortium name="The MGC Project Team"/>
        </authorList>
    </citation>
    <scope>NUCLEOTIDE SEQUENCE [LARGE SCALE MRNA]</scope>
    <source>
        <tissue>Eye</tissue>
    </source>
</reference>
<reference key="3">
    <citation type="journal article" date="2009" name="Genes Dev.">
        <title>Proteomic analysis of murine Piwi proteins reveals a role for arginine methylation in specifying interaction with Tudor family members.</title>
        <authorList>
            <person name="Vagin V.V."/>
            <person name="Wohlschlegel J."/>
            <person name="Qu J."/>
            <person name="Jonsson Z."/>
            <person name="Huang X."/>
            <person name="Chuma S."/>
            <person name="Girard A."/>
            <person name="Sachidanandam R."/>
            <person name="Hannon G.J."/>
            <person name="Aravin A.A."/>
        </authorList>
    </citation>
    <scope>INTERACTION WITH PIWIL1 AND PIWIL4</scope>
</reference>
<reference key="4">
    <citation type="journal article" date="2009" name="Proc. Natl. Acad. Sci. U.S.A.">
        <title>Mouse Piwi interactome identifies binding mechanism of Tdrkh Tudor domain to arginine methylated Miwi.</title>
        <authorList>
            <person name="Chen C."/>
            <person name="Jin J."/>
            <person name="James D.A."/>
            <person name="Adams-Cioaba M.A."/>
            <person name="Park J.G."/>
            <person name="Guo Y."/>
            <person name="Tenaglia E."/>
            <person name="Xu C."/>
            <person name="Gish G."/>
            <person name="Min J."/>
            <person name="Pawson T."/>
        </authorList>
    </citation>
    <scope>SUBCELLULAR LOCATION</scope>
    <scope>TISSUE SPECIFICITY</scope>
    <scope>DEVELOPMENTAL STAGE</scope>
    <scope>INTERACTION WITH PIWIL1 AND PIWIL2</scope>
</reference>
<reference key="5">
    <citation type="journal article" date="2010" name="Cell">
        <title>A tissue-specific atlas of mouse protein phosphorylation and expression.</title>
        <authorList>
            <person name="Huttlin E.L."/>
            <person name="Jedrychowski M.P."/>
            <person name="Elias J.E."/>
            <person name="Goswami T."/>
            <person name="Rad R."/>
            <person name="Beausoleil S.A."/>
            <person name="Villen J."/>
            <person name="Haas W."/>
            <person name="Sowa M.E."/>
            <person name="Gygi S.P."/>
        </authorList>
    </citation>
    <scope>IDENTIFICATION BY MASS SPECTROMETRY [LARGE SCALE ANALYSIS]</scope>
    <source>
        <tissue>Brain</tissue>
        <tissue>Brown adipose tissue</tissue>
        <tissue>Pancreas</tissue>
        <tissue>Testis</tissue>
    </source>
</reference>
<reference key="6">
    <citation type="journal article" date="2013" name="EMBO J.">
        <title>Tdrkh is essential for spermatogenesis and participates in primary piRNA biogenesis in the germline.</title>
        <authorList>
            <person name="Saxe J.P."/>
            <person name="Chen M."/>
            <person name="Zhao H."/>
            <person name="Lin H."/>
        </authorList>
    </citation>
    <scope>FUNCTION</scope>
    <scope>SUBCELLULAR LOCATION</scope>
    <scope>DISRUPTION PHENOTYPE</scope>
    <scope>DEVELOPMENTAL STAGE</scope>
    <scope>INTERACTION WITH PIWIL1 AND PIWIL4</scope>
</reference>
<reference key="7">
    <citation type="submission" date="2004-11" db="PDB data bank">
        <title>Solution structure of KH domain in protein BAB28342.</title>
        <authorList>
            <consortium name="RIKEN structural genomics initiative (RSGI)"/>
        </authorList>
    </citation>
    <scope>STRUCTURE BY NMR OF 118-208</scope>
</reference>
<keyword id="KW-0002">3D-structure</keyword>
<keyword id="KW-0963">Cytoplasm</keyword>
<keyword id="KW-0221">Differentiation</keyword>
<keyword id="KW-1017">Isopeptide bond</keyword>
<keyword id="KW-0496">Mitochondrion</keyword>
<keyword id="KW-0597">Phosphoprotein</keyword>
<keyword id="KW-1185">Reference proteome</keyword>
<keyword id="KW-0677">Repeat</keyword>
<keyword id="KW-0694">RNA-binding</keyword>
<keyword id="KW-0943">RNA-mediated gene silencing</keyword>
<keyword id="KW-0744">Spermatogenesis</keyword>
<keyword id="KW-0832">Ubl conjugation</keyword>
<dbReference type="EMBL" id="GL456099">
    <property type="status" value="NOT_ANNOTATED_CDS"/>
    <property type="molecule type" value="Genomic_DNA"/>
</dbReference>
<dbReference type="EMBL" id="BC049363">
    <property type="protein sequence ID" value="AAH49363.1"/>
    <property type="molecule type" value="mRNA"/>
</dbReference>
<dbReference type="CCDS" id="CCDS38534.1"/>
<dbReference type="RefSeq" id="NP_001344640.1">
    <property type="nucleotide sequence ID" value="NM_001357711.1"/>
</dbReference>
<dbReference type="RefSeq" id="NP_001344641.1">
    <property type="nucleotide sequence ID" value="NM_001357712.1"/>
</dbReference>
<dbReference type="RefSeq" id="NP_082583.1">
    <property type="nucleotide sequence ID" value="NM_028307.2"/>
</dbReference>
<dbReference type="RefSeq" id="XP_006502201.1">
    <property type="nucleotide sequence ID" value="XM_006502138.3"/>
</dbReference>
<dbReference type="RefSeq" id="XP_017175235.1">
    <property type="nucleotide sequence ID" value="XM_017319746.1"/>
</dbReference>
<dbReference type="PDB" id="1WE8">
    <property type="method" value="NMR"/>
    <property type="chains" value="A=118-208"/>
</dbReference>
<dbReference type="PDBsum" id="1WE8"/>
<dbReference type="SMR" id="Q80VL1"/>
<dbReference type="BioGRID" id="215482">
    <property type="interactions" value="1"/>
</dbReference>
<dbReference type="FunCoup" id="Q80VL1">
    <property type="interactions" value="1500"/>
</dbReference>
<dbReference type="IntAct" id="Q80VL1">
    <property type="interactions" value="1"/>
</dbReference>
<dbReference type="MINT" id="Q80VL1"/>
<dbReference type="STRING" id="10090.ENSMUSP00000129635"/>
<dbReference type="GlyGen" id="Q80VL1">
    <property type="glycosylation" value="2 sites, 1 N-linked glycan (1 site), 1 O-linked glycan (1 site)"/>
</dbReference>
<dbReference type="iPTMnet" id="Q80VL1"/>
<dbReference type="PhosphoSitePlus" id="Q80VL1"/>
<dbReference type="SwissPalm" id="Q80VL1"/>
<dbReference type="PaxDb" id="10090-ENSMUSP00000129635"/>
<dbReference type="ProteomicsDB" id="262850"/>
<dbReference type="Pumba" id="Q80VL1"/>
<dbReference type="Antibodypedia" id="10583">
    <property type="antibodies" value="105 antibodies from 26 providers"/>
</dbReference>
<dbReference type="Ensembl" id="ENSMUST00000045245.10">
    <property type="protein sequence ID" value="ENSMUSP00000041002.6"/>
    <property type="gene ID" value="ENSMUSG00000041912.13"/>
</dbReference>
<dbReference type="Ensembl" id="ENSMUST00000166032.8">
    <property type="protein sequence ID" value="ENSMUSP00000129635.2"/>
    <property type="gene ID" value="ENSMUSG00000041912.13"/>
</dbReference>
<dbReference type="Ensembl" id="ENSMUST00000197901.5">
    <property type="protein sequence ID" value="ENSMUSP00000142561.2"/>
    <property type="gene ID" value="ENSMUSG00000041912.13"/>
</dbReference>
<dbReference type="GeneID" id="72634"/>
<dbReference type="KEGG" id="mmu:72634"/>
<dbReference type="UCSC" id="uc008qge.1">
    <property type="organism name" value="mouse"/>
</dbReference>
<dbReference type="AGR" id="MGI:1919884"/>
<dbReference type="CTD" id="11022"/>
<dbReference type="MGI" id="MGI:1919884">
    <property type="gene designation" value="Tdrkh"/>
</dbReference>
<dbReference type="VEuPathDB" id="HostDB:ENSMUSG00000041912"/>
<dbReference type="eggNOG" id="KOG2279">
    <property type="taxonomic scope" value="Eukaryota"/>
</dbReference>
<dbReference type="GeneTree" id="ENSGT00940000159364"/>
<dbReference type="HOGENOM" id="CLU_023629_1_0_1"/>
<dbReference type="InParanoid" id="Q80VL1"/>
<dbReference type="OMA" id="NMVQEMT"/>
<dbReference type="OrthoDB" id="9995375at2759"/>
<dbReference type="PhylomeDB" id="Q80VL1"/>
<dbReference type="TreeFam" id="TF318292"/>
<dbReference type="BioGRID-ORCS" id="72634">
    <property type="hits" value="5 hits in 83 CRISPR screens"/>
</dbReference>
<dbReference type="CD-CODE" id="CE726F99">
    <property type="entry name" value="Postsynaptic density"/>
</dbReference>
<dbReference type="ChiTaRS" id="Tdrkh">
    <property type="organism name" value="mouse"/>
</dbReference>
<dbReference type="EvolutionaryTrace" id="Q80VL1"/>
<dbReference type="PRO" id="PR:Q80VL1"/>
<dbReference type="Proteomes" id="UP000000589">
    <property type="component" value="Chromosome 3"/>
</dbReference>
<dbReference type="RNAct" id="Q80VL1">
    <property type="molecule type" value="protein"/>
</dbReference>
<dbReference type="Bgee" id="ENSMUSG00000041912">
    <property type="expression patterns" value="Expressed in embryonic brain and 184 other cell types or tissues"/>
</dbReference>
<dbReference type="ExpressionAtlas" id="Q80VL1">
    <property type="expression patterns" value="baseline and differential"/>
</dbReference>
<dbReference type="GO" id="GO:0005737">
    <property type="term" value="C:cytoplasm"/>
    <property type="evidence" value="ECO:0000314"/>
    <property type="project" value="MGI"/>
</dbReference>
<dbReference type="GO" id="GO:0005829">
    <property type="term" value="C:cytosol"/>
    <property type="evidence" value="ECO:0000304"/>
    <property type="project" value="Reactome"/>
</dbReference>
<dbReference type="GO" id="GO:0005739">
    <property type="term" value="C:mitochondrion"/>
    <property type="evidence" value="ECO:0000314"/>
    <property type="project" value="UniProtKB"/>
</dbReference>
<dbReference type="GO" id="GO:0071546">
    <property type="term" value="C:pi-body"/>
    <property type="evidence" value="ECO:0000314"/>
    <property type="project" value="UniProtKB"/>
</dbReference>
<dbReference type="GO" id="GO:0071547">
    <property type="term" value="C:piP-body"/>
    <property type="evidence" value="ECO:0000314"/>
    <property type="project" value="UniProtKB"/>
</dbReference>
<dbReference type="GO" id="GO:0003723">
    <property type="term" value="F:RNA binding"/>
    <property type="evidence" value="ECO:0007669"/>
    <property type="project" value="UniProtKB-KW"/>
</dbReference>
<dbReference type="GO" id="GO:0030154">
    <property type="term" value="P:cell differentiation"/>
    <property type="evidence" value="ECO:0007669"/>
    <property type="project" value="UniProtKB-KW"/>
</dbReference>
<dbReference type="GO" id="GO:0009566">
    <property type="term" value="P:fertilization"/>
    <property type="evidence" value="ECO:0000315"/>
    <property type="project" value="UniProtKB"/>
</dbReference>
<dbReference type="GO" id="GO:0007140">
    <property type="term" value="P:male meiotic nuclear division"/>
    <property type="evidence" value="ECO:0000315"/>
    <property type="project" value="UniProtKB"/>
</dbReference>
<dbReference type="GO" id="GO:0034587">
    <property type="term" value="P:piRNA processing"/>
    <property type="evidence" value="ECO:0000315"/>
    <property type="project" value="UniProtKB"/>
</dbReference>
<dbReference type="GO" id="GO:0007283">
    <property type="term" value="P:spermatogenesis"/>
    <property type="evidence" value="ECO:0000315"/>
    <property type="project" value="UniProtKB"/>
</dbReference>
<dbReference type="CDD" id="cd22428">
    <property type="entry name" value="KH-I_TDRKH_rpt1"/>
    <property type="match status" value="1"/>
</dbReference>
<dbReference type="CDD" id="cd22429">
    <property type="entry name" value="KH-I_TDRKH_rpt2"/>
    <property type="match status" value="1"/>
</dbReference>
<dbReference type="CDD" id="cd20412">
    <property type="entry name" value="Tudor_TDRD2"/>
    <property type="match status" value="1"/>
</dbReference>
<dbReference type="FunFam" id="3.30.1370.10:FF:000056">
    <property type="entry name" value="Tudor and KH domain containing"/>
    <property type="match status" value="1"/>
</dbReference>
<dbReference type="FunFam" id="3.30.1370.10:FF:000059">
    <property type="entry name" value="Tudor and KH domain containing, isoform CRA_a"/>
    <property type="match status" value="1"/>
</dbReference>
<dbReference type="FunFam" id="2.30.30.140:FF:000084">
    <property type="entry name" value="Tudor and KH domain-containing protein"/>
    <property type="match status" value="1"/>
</dbReference>
<dbReference type="Gene3D" id="2.30.30.140">
    <property type="match status" value="1"/>
</dbReference>
<dbReference type="Gene3D" id="2.40.50.90">
    <property type="match status" value="1"/>
</dbReference>
<dbReference type="Gene3D" id="3.30.1370.10">
    <property type="entry name" value="K Homology domain, type 1"/>
    <property type="match status" value="2"/>
</dbReference>
<dbReference type="InterPro" id="IPR047382">
    <property type="entry name" value="KH-I_TDRKH_rpt1"/>
</dbReference>
<dbReference type="InterPro" id="IPR047381">
    <property type="entry name" value="KH-I_TDRKH_rpt2"/>
</dbReference>
<dbReference type="InterPro" id="IPR004087">
    <property type="entry name" value="KH_dom"/>
</dbReference>
<dbReference type="InterPro" id="IPR004088">
    <property type="entry name" value="KH_dom_type_1"/>
</dbReference>
<dbReference type="InterPro" id="IPR036612">
    <property type="entry name" value="KH_dom_type_1_sf"/>
</dbReference>
<dbReference type="InterPro" id="IPR035437">
    <property type="entry name" value="SNase_OB-fold_sf"/>
</dbReference>
<dbReference type="InterPro" id="IPR047380">
    <property type="entry name" value="TDRD2-like_tudor"/>
</dbReference>
<dbReference type="InterPro" id="IPR002999">
    <property type="entry name" value="Tudor"/>
</dbReference>
<dbReference type="InterPro" id="IPR050621">
    <property type="entry name" value="Tudor_domain_containing"/>
</dbReference>
<dbReference type="PANTHER" id="PTHR22948:SF18">
    <property type="entry name" value="TUDOR AND KH DOMAIN-CONTAINING PROTEIN"/>
    <property type="match status" value="1"/>
</dbReference>
<dbReference type="PANTHER" id="PTHR22948">
    <property type="entry name" value="TUDOR DOMAIN CONTAINING PROTEIN"/>
    <property type="match status" value="1"/>
</dbReference>
<dbReference type="Pfam" id="PF00013">
    <property type="entry name" value="KH_1"/>
    <property type="match status" value="2"/>
</dbReference>
<dbReference type="Pfam" id="PF00567">
    <property type="entry name" value="TUDOR"/>
    <property type="match status" value="1"/>
</dbReference>
<dbReference type="SMART" id="SM00322">
    <property type="entry name" value="KH"/>
    <property type="match status" value="2"/>
</dbReference>
<dbReference type="SMART" id="SM00333">
    <property type="entry name" value="TUDOR"/>
    <property type="match status" value="1"/>
</dbReference>
<dbReference type="SUPFAM" id="SSF54791">
    <property type="entry name" value="Eukaryotic type KH-domain (KH-domain type I)"/>
    <property type="match status" value="2"/>
</dbReference>
<dbReference type="SUPFAM" id="SSF63748">
    <property type="entry name" value="Tudor/PWWP/MBT"/>
    <property type="match status" value="1"/>
</dbReference>
<dbReference type="PROSITE" id="PS50084">
    <property type="entry name" value="KH_TYPE_1"/>
    <property type="match status" value="2"/>
</dbReference>
<dbReference type="PROSITE" id="PS50304">
    <property type="entry name" value="TUDOR"/>
    <property type="match status" value="1"/>
</dbReference>
<evidence type="ECO:0000250" key="1">
    <source>
        <dbReference type="UniProtKB" id="Q9Y2W6"/>
    </source>
</evidence>
<evidence type="ECO:0000255" key="2">
    <source>
        <dbReference type="PROSITE-ProRule" id="PRU00117"/>
    </source>
</evidence>
<evidence type="ECO:0000255" key="3">
    <source>
        <dbReference type="PROSITE-ProRule" id="PRU00211"/>
    </source>
</evidence>
<evidence type="ECO:0000256" key="4">
    <source>
        <dbReference type="SAM" id="MobiDB-lite"/>
    </source>
</evidence>
<evidence type="ECO:0000269" key="5">
    <source>
    </source>
</evidence>
<evidence type="ECO:0000269" key="6">
    <source>
    </source>
</evidence>
<evidence type="ECO:0000269" key="7">
    <source>
    </source>
</evidence>
<evidence type="ECO:0000305" key="8"/>
<evidence type="ECO:0007829" key="9">
    <source>
        <dbReference type="PDB" id="1WE8"/>
    </source>
</evidence>
<gene>
    <name type="primary">Tdrkh</name>
    <name type="synonym">Tdrd2</name>
</gene>
<comment type="function">
    <text evidence="7">Participates in the primary piRNA biogenesis pathway and is required during spermatogenesis to repress transposable elements and prevent their mobilization, which is essential for the germline integrity. The piRNA metabolic process mediates the repression of transposable elements during meiosis by forming complexes composed of piRNAs and Piwi proteins and govern the methylation and subsequent repression of transposons. Required for the final steps of primary piRNA biogenesis by participating in the processing of 31-37 nt intermediates into mature piRNAs. May act in pi-bodies and piP-bodies by transferring piRNA precursors or intermediates to or between these granules.</text>
</comment>
<comment type="subunit">
    <text evidence="5 6 7">Interacts with (symmetrically methylated) PIWIL1, PIWIL2 and PIWIL4.</text>
</comment>
<comment type="subcellular location">
    <subcellularLocation>
        <location>Cytoplasm</location>
    </subcellularLocation>
    <subcellularLocation>
        <location>Mitochondrion</location>
    </subcellularLocation>
    <text>Probable component of the meiotic nuage, also named P granule, a germ-cell-specific organelle required to repress transposon activity during meiosis. Colocalizes with pi- and piP-bodies, a subset of the nuage which contains secondary piRNAs. Associated with mitochondria in the germline.</text>
</comment>
<comment type="tissue specificity">
    <text evidence="6">Highly expressed in testis, present at lower level in brain. Weakly or not expressed in other tissues (at protein level).</text>
</comment>
<comment type="developmental stage">
    <text evidence="6 7">Present at low level in male gonads in postnatal day 7 (P7) Expressed at higher level in P14, P21 and adult testes, correlating with the onset of meiosis (at protein level). Expressed in spermatogonia, spermatocytes and round spermatids, but not in elongating spermatids.</text>
</comment>
<comment type="PTM">
    <text evidence="1">Ubiquitinated by PRKN during mitophagy, leading to its degradation and enhancement of mitophagy. Deubiquitinated by USP30.</text>
</comment>
<comment type="disruption phenotype">
    <text evidence="7">Male mice are sterile due to defects in male meiosis, piRNA production defects, DNA demethylation of LINE-1 (L1) transposable elements and an increase in L1 expression in the adult testis. Mutants have severely reduced levels of mature piRNAs and accumulate 1'U-containing, 2'O-methylated 31-37 nt RNAs that complement the missing mature piRNAs.</text>
</comment>
<comment type="similarity">
    <text evidence="8">Belongs to the Tdrkh family.</text>
</comment>
<accession>Q80VL1</accession>
<name>TDRKH_MOUSE</name>